<name>DF163_ARATH</name>
<evidence type="ECO:0000250" key="1"/>
<evidence type="ECO:0000255" key="2"/>
<evidence type="ECO:0000269" key="3">
    <source>
    </source>
</evidence>
<evidence type="ECO:0000305" key="4"/>
<evidence type="ECO:0000312" key="5">
    <source>
        <dbReference type="EMBL" id="AAM61333.1"/>
    </source>
</evidence>
<gene>
    <name type="primary">LCR24</name>
    <name type="ordered locus">At4g29285</name>
    <name type="ORF">F17A13</name>
</gene>
<comment type="subcellular location">
    <subcellularLocation>
        <location evidence="1">Secreted</location>
    </subcellularLocation>
</comment>
<comment type="similarity">
    <text evidence="4">Belongs to the DEFL family.</text>
</comment>
<comment type="sequence caution" evidence="4">
    <conflict type="erroneous initiation">
        <sequence resource="EMBL-CDS" id="AAM61333"/>
    </conflict>
</comment>
<reference evidence="4" key="1">
    <citation type="journal article" date="1999" name="Nature">
        <title>Sequence and analysis of chromosome 4 of the plant Arabidopsis thaliana.</title>
        <authorList>
            <person name="Mayer K.F.X."/>
            <person name="Schueller C."/>
            <person name="Wambutt R."/>
            <person name="Murphy G."/>
            <person name="Volckaert G."/>
            <person name="Pohl T."/>
            <person name="Duesterhoeft A."/>
            <person name="Stiekema W."/>
            <person name="Entian K.-D."/>
            <person name="Terryn N."/>
            <person name="Harris B."/>
            <person name="Ansorge W."/>
            <person name="Brandt P."/>
            <person name="Grivell L.A."/>
            <person name="Rieger M."/>
            <person name="Weichselgartner M."/>
            <person name="de Simone V."/>
            <person name="Obermaier B."/>
            <person name="Mache R."/>
            <person name="Mueller M."/>
            <person name="Kreis M."/>
            <person name="Delseny M."/>
            <person name="Puigdomenech P."/>
            <person name="Watson M."/>
            <person name="Schmidtheini T."/>
            <person name="Reichert B."/>
            <person name="Portetelle D."/>
            <person name="Perez-Alonso M."/>
            <person name="Boutry M."/>
            <person name="Bancroft I."/>
            <person name="Vos P."/>
            <person name="Hoheisel J."/>
            <person name="Zimmermann W."/>
            <person name="Wedler H."/>
            <person name="Ridley P."/>
            <person name="Langham S.-A."/>
            <person name="McCullagh B."/>
            <person name="Bilham L."/>
            <person name="Robben J."/>
            <person name="van der Schueren J."/>
            <person name="Grymonprez B."/>
            <person name="Chuang Y.-J."/>
            <person name="Vandenbussche F."/>
            <person name="Braeken M."/>
            <person name="Weltjens I."/>
            <person name="Voet M."/>
            <person name="Bastiaens I."/>
            <person name="Aert R."/>
            <person name="Defoor E."/>
            <person name="Weitzenegger T."/>
            <person name="Bothe G."/>
            <person name="Ramsperger U."/>
            <person name="Hilbert H."/>
            <person name="Braun M."/>
            <person name="Holzer E."/>
            <person name="Brandt A."/>
            <person name="Peters S."/>
            <person name="van Staveren M."/>
            <person name="Dirkse W."/>
            <person name="Mooijman P."/>
            <person name="Klein Lankhorst R."/>
            <person name="Rose M."/>
            <person name="Hauf J."/>
            <person name="Koetter P."/>
            <person name="Berneiser S."/>
            <person name="Hempel S."/>
            <person name="Feldpausch M."/>
            <person name="Lamberth S."/>
            <person name="Van den Daele H."/>
            <person name="De Keyser A."/>
            <person name="Buysshaert C."/>
            <person name="Gielen J."/>
            <person name="Villarroel R."/>
            <person name="De Clercq R."/>
            <person name="van Montagu M."/>
            <person name="Rogers J."/>
            <person name="Cronin A."/>
            <person name="Quail M.A."/>
            <person name="Bray-Allen S."/>
            <person name="Clark L."/>
            <person name="Doggett J."/>
            <person name="Hall S."/>
            <person name="Kay M."/>
            <person name="Lennard N."/>
            <person name="McLay K."/>
            <person name="Mayes R."/>
            <person name="Pettett A."/>
            <person name="Rajandream M.A."/>
            <person name="Lyne M."/>
            <person name="Benes V."/>
            <person name="Rechmann S."/>
            <person name="Borkova D."/>
            <person name="Bloecker H."/>
            <person name="Scharfe M."/>
            <person name="Grimm M."/>
            <person name="Loehnert T.-H."/>
            <person name="Dose S."/>
            <person name="de Haan M."/>
            <person name="Maarse A.C."/>
            <person name="Schaefer M."/>
            <person name="Mueller-Auer S."/>
            <person name="Gabel C."/>
            <person name="Fuchs M."/>
            <person name="Fartmann B."/>
            <person name="Granderath K."/>
            <person name="Dauner D."/>
            <person name="Herzl A."/>
            <person name="Neumann S."/>
            <person name="Argiriou A."/>
            <person name="Vitale D."/>
            <person name="Liguori R."/>
            <person name="Piravandi E."/>
            <person name="Massenet O."/>
            <person name="Quigley F."/>
            <person name="Clabauld G."/>
            <person name="Muendlein A."/>
            <person name="Felber R."/>
            <person name="Schnabl S."/>
            <person name="Hiller R."/>
            <person name="Schmidt W."/>
            <person name="Lecharny A."/>
            <person name="Aubourg S."/>
            <person name="Chefdor F."/>
            <person name="Cooke R."/>
            <person name="Berger C."/>
            <person name="Monfort A."/>
            <person name="Casacuberta E."/>
            <person name="Gibbons T."/>
            <person name="Weber N."/>
            <person name="Vandenbol M."/>
            <person name="Bargues M."/>
            <person name="Terol J."/>
            <person name="Torres A."/>
            <person name="Perez-Perez A."/>
            <person name="Purnelle B."/>
            <person name="Bent E."/>
            <person name="Johnson S."/>
            <person name="Tacon D."/>
            <person name="Jesse T."/>
            <person name="Heijnen L."/>
            <person name="Schwarz S."/>
            <person name="Scholler P."/>
            <person name="Heber S."/>
            <person name="Francs P."/>
            <person name="Bielke C."/>
            <person name="Frishman D."/>
            <person name="Haase D."/>
            <person name="Lemcke K."/>
            <person name="Mewes H.-W."/>
            <person name="Stocker S."/>
            <person name="Zaccaria P."/>
            <person name="Bevan M."/>
            <person name="Wilson R.K."/>
            <person name="de la Bastide M."/>
            <person name="Habermann K."/>
            <person name="Parnell L."/>
            <person name="Dedhia N."/>
            <person name="Gnoj L."/>
            <person name="Schutz K."/>
            <person name="Huang E."/>
            <person name="Spiegel L."/>
            <person name="Sekhon M."/>
            <person name="Murray J."/>
            <person name="Sheet P."/>
            <person name="Cordes M."/>
            <person name="Abu-Threideh J."/>
            <person name="Stoneking T."/>
            <person name="Kalicki J."/>
            <person name="Graves T."/>
            <person name="Harmon G."/>
            <person name="Edwards J."/>
            <person name="Latreille P."/>
            <person name="Courtney L."/>
            <person name="Cloud J."/>
            <person name="Abbott A."/>
            <person name="Scott K."/>
            <person name="Johnson D."/>
            <person name="Minx P."/>
            <person name="Bentley D."/>
            <person name="Fulton B."/>
            <person name="Miller N."/>
            <person name="Greco T."/>
            <person name="Kemp K."/>
            <person name="Kramer J."/>
            <person name="Fulton L."/>
            <person name="Mardis E."/>
            <person name="Dante M."/>
            <person name="Pepin K."/>
            <person name="Hillier L.W."/>
            <person name="Nelson J."/>
            <person name="Spieth J."/>
            <person name="Ryan E."/>
            <person name="Andrews S."/>
            <person name="Geisel C."/>
            <person name="Layman D."/>
            <person name="Du H."/>
            <person name="Ali J."/>
            <person name="Berghoff A."/>
            <person name="Jones K."/>
            <person name="Drone K."/>
            <person name="Cotton M."/>
            <person name="Joshu C."/>
            <person name="Antonoiu B."/>
            <person name="Zidanic M."/>
            <person name="Strong C."/>
            <person name="Sun H."/>
            <person name="Lamar B."/>
            <person name="Yordan C."/>
            <person name="Ma P."/>
            <person name="Zhong J."/>
            <person name="Preston R."/>
            <person name="Vil D."/>
            <person name="Shekher M."/>
            <person name="Matero A."/>
            <person name="Shah R."/>
            <person name="Swaby I.K."/>
            <person name="O'Shaughnessy A."/>
            <person name="Rodriguez M."/>
            <person name="Hoffman J."/>
            <person name="Till S."/>
            <person name="Granat S."/>
            <person name="Shohdy N."/>
            <person name="Hasegawa A."/>
            <person name="Hameed A."/>
            <person name="Lodhi M."/>
            <person name="Johnson A."/>
            <person name="Chen E."/>
            <person name="Marra M.A."/>
            <person name="Martienssen R."/>
            <person name="McCombie W.R."/>
        </authorList>
    </citation>
    <scope>NUCLEOTIDE SEQUENCE [LARGE SCALE GENOMIC DNA]</scope>
    <source>
        <strain evidence="3">cv. Columbia</strain>
    </source>
</reference>
<reference key="2">
    <citation type="journal article" date="2017" name="Plant J.">
        <title>Araport11: a complete reannotation of the Arabidopsis thaliana reference genome.</title>
        <authorList>
            <person name="Cheng C.Y."/>
            <person name="Krishnakumar V."/>
            <person name="Chan A.P."/>
            <person name="Thibaud-Nissen F."/>
            <person name="Schobel S."/>
            <person name="Town C.D."/>
        </authorList>
    </citation>
    <scope>GENOME REANNOTATION</scope>
    <source>
        <strain>cv. Columbia</strain>
    </source>
</reference>
<reference key="3">
    <citation type="submission" date="2006-08" db="EMBL/GenBank/DDBJ databases">
        <title>Arabidopsis ORF Clones.</title>
        <authorList>
            <person name="Quinitio C."/>
            <person name="Chen H."/>
            <person name="Kim C.J."/>
            <person name="Shinn P."/>
            <person name="Ecker J.R."/>
        </authorList>
    </citation>
    <scope>NUCLEOTIDE SEQUENCE [LARGE SCALE MRNA]</scope>
    <source>
        <strain>cv. Columbia</strain>
    </source>
</reference>
<reference key="4">
    <citation type="submission" date="2002-03" db="EMBL/GenBank/DDBJ databases">
        <title>Full-length cDNA from Arabidopsis thaliana.</title>
        <authorList>
            <person name="Brover V.V."/>
            <person name="Troukhan M.E."/>
            <person name="Alexandrov N.A."/>
            <person name="Lu Y.-P."/>
            <person name="Flavell R.B."/>
            <person name="Feldmann K.A."/>
        </authorList>
    </citation>
    <scope>NUCLEOTIDE SEQUENCE [LARGE SCALE MRNA]</scope>
</reference>
<reference evidence="4" key="5">
    <citation type="journal article" date="2001" name="Plant Mol. Biol.">
        <title>Two large Arabidopsis thaliana gene families are homologous to the Brassica gene superfamily that encodes pollen coat proteins and the male component of the self-incompatibility response.</title>
        <authorList>
            <person name="Vanoosthuyse V."/>
            <person name="Miege C."/>
            <person name="Dumas C."/>
            <person name="Cock J.M."/>
        </authorList>
    </citation>
    <scope>IDENTIFICATION</scope>
</reference>
<reference key="6">
    <citation type="journal article" date="2005" name="Plant Physiol.">
        <title>Genome organization of more than 300 defensin-like genes in Arabidopsis.</title>
        <authorList>
            <person name="Silverstein K.A.T."/>
            <person name="Graham M.A."/>
            <person name="Paape T.D."/>
            <person name="VandenBosch K.A."/>
        </authorList>
    </citation>
    <scope>GENE FAMILY</scope>
</reference>
<feature type="signal peptide" evidence="2">
    <location>
        <begin position="1"/>
        <end position="27"/>
    </location>
</feature>
<feature type="chain" id="PRO_0000017265" description="Defensin-like protein 163">
    <location>
        <begin position="28"/>
        <end position="76"/>
    </location>
</feature>
<feature type="disulfide bond" evidence="1">
    <location>
        <begin position="33"/>
        <end position="76"/>
    </location>
</feature>
<feature type="disulfide bond" evidence="1">
    <location>
        <begin position="43"/>
        <end position="62"/>
    </location>
</feature>
<feature type="disulfide bond" evidence="1">
    <location>
        <begin position="48"/>
        <end position="70"/>
    </location>
</feature>
<feature type="disulfide bond" evidence="1">
    <location>
        <begin position="52"/>
        <end position="72"/>
    </location>
</feature>
<sequence length="76" mass="8465">MAKLIYSYLFISMFVLSVLLALPNAEGADIKRCVVDVKLSKPCTFQECIPLCFQRYNGNGVCTGKKNEICTCAYNC</sequence>
<accession>Q8LFM0</accession>
<accession>P82738</accession>
<accession>Q0V821</accession>
<organism evidence="5">
    <name type="scientific">Arabidopsis thaliana</name>
    <name type="common">Mouse-ear cress</name>
    <dbReference type="NCBI Taxonomy" id="3702"/>
    <lineage>
        <taxon>Eukaryota</taxon>
        <taxon>Viridiplantae</taxon>
        <taxon>Streptophyta</taxon>
        <taxon>Embryophyta</taxon>
        <taxon>Tracheophyta</taxon>
        <taxon>Spermatophyta</taxon>
        <taxon>Magnoliopsida</taxon>
        <taxon>eudicotyledons</taxon>
        <taxon>Gunneridae</taxon>
        <taxon>Pentapetalae</taxon>
        <taxon>rosids</taxon>
        <taxon>malvids</taxon>
        <taxon>Brassicales</taxon>
        <taxon>Brassicaceae</taxon>
        <taxon>Camelineae</taxon>
        <taxon>Arabidopsis</taxon>
    </lineage>
</organism>
<protein>
    <recommendedName>
        <fullName>Defensin-like protein 163</fullName>
    </recommendedName>
    <alternativeName>
        <fullName>Low-molecular-weight cysteine-rich protein 24</fullName>
        <shortName>Protein LCR24</shortName>
    </alternativeName>
</protein>
<proteinExistence type="inferred from homology"/>
<dbReference type="EMBL" id="AL096692">
    <property type="status" value="NOT_ANNOTATED_CDS"/>
    <property type="molecule type" value="Genomic_DNA"/>
</dbReference>
<dbReference type="EMBL" id="AL161574">
    <property type="status" value="NOT_ANNOTATED_CDS"/>
    <property type="molecule type" value="Genomic_DNA"/>
</dbReference>
<dbReference type="EMBL" id="CP002687">
    <property type="protein sequence ID" value="AEE85613.1"/>
    <property type="molecule type" value="Genomic_DNA"/>
</dbReference>
<dbReference type="EMBL" id="BT026399">
    <property type="protein sequence ID" value="ABH04506.1"/>
    <property type="molecule type" value="mRNA"/>
</dbReference>
<dbReference type="EMBL" id="AY084764">
    <property type="protein sequence ID" value="AAM61333.1"/>
    <property type="status" value="ALT_INIT"/>
    <property type="molecule type" value="mRNA"/>
</dbReference>
<dbReference type="RefSeq" id="NP_567827.1">
    <property type="nucleotide sequence ID" value="NM_119073.2"/>
</dbReference>
<dbReference type="SMR" id="Q8LFM0"/>
<dbReference type="PaxDb" id="3702-AT4G29285.1"/>
<dbReference type="ProteomicsDB" id="224649"/>
<dbReference type="EnsemblPlants" id="AT4G29285.1">
    <property type="protein sequence ID" value="AT4G29285.1"/>
    <property type="gene ID" value="AT4G29285"/>
</dbReference>
<dbReference type="GeneID" id="829050"/>
<dbReference type="Gramene" id="AT4G29285.1">
    <property type="protein sequence ID" value="AT4G29285.1"/>
    <property type="gene ID" value="AT4G29285"/>
</dbReference>
<dbReference type="KEGG" id="ath:AT4G29285"/>
<dbReference type="Araport" id="AT4G29285"/>
<dbReference type="TAIR" id="AT4G29285">
    <property type="gene designation" value="LCR24"/>
</dbReference>
<dbReference type="HOGENOM" id="CLU_182511_1_1_1"/>
<dbReference type="InParanoid" id="Q8LFM0"/>
<dbReference type="OMA" id="ICTCAYN"/>
<dbReference type="PhylomeDB" id="Q8LFM0"/>
<dbReference type="PRO" id="PR:Q8LFM0"/>
<dbReference type="Proteomes" id="UP000006548">
    <property type="component" value="Chromosome 4"/>
</dbReference>
<dbReference type="ExpressionAtlas" id="Q8LFM0">
    <property type="expression patterns" value="baseline and differential"/>
</dbReference>
<dbReference type="GO" id="GO:0005576">
    <property type="term" value="C:extracellular region"/>
    <property type="evidence" value="ECO:0007669"/>
    <property type="project" value="UniProtKB-SubCell"/>
</dbReference>
<dbReference type="GO" id="GO:0050832">
    <property type="term" value="P:defense response to fungus"/>
    <property type="evidence" value="ECO:0007669"/>
    <property type="project" value="UniProtKB-KW"/>
</dbReference>
<dbReference type="GO" id="GO:0031640">
    <property type="term" value="P:killing of cells of another organism"/>
    <property type="evidence" value="ECO:0007669"/>
    <property type="project" value="UniProtKB-KW"/>
</dbReference>
<dbReference type="InterPro" id="IPR010851">
    <property type="entry name" value="DEFL"/>
</dbReference>
<dbReference type="PANTHER" id="PTHR33830:SF11">
    <property type="entry name" value="DEFENSIN-LIKE PROTEIN 163-RELATED"/>
    <property type="match status" value="1"/>
</dbReference>
<dbReference type="PANTHER" id="PTHR33830">
    <property type="entry name" value="DEFENSIN-LIKE PROTEIN 184-RELATED"/>
    <property type="match status" value="1"/>
</dbReference>
<dbReference type="Pfam" id="PF07333">
    <property type="entry name" value="SLR1-BP"/>
    <property type="match status" value="1"/>
</dbReference>
<keyword id="KW-0929">Antimicrobial</keyword>
<keyword id="KW-1015">Disulfide bond</keyword>
<keyword id="KW-0295">Fungicide</keyword>
<keyword id="KW-0611">Plant defense</keyword>
<keyword id="KW-1185">Reference proteome</keyword>
<keyword id="KW-0964">Secreted</keyword>
<keyword id="KW-0732">Signal</keyword>